<evidence type="ECO:0000255" key="1">
    <source>
        <dbReference type="HAMAP-Rule" id="MF_00208"/>
    </source>
</evidence>
<keyword id="KW-0067">ATP-binding</keyword>
<keyword id="KW-0131">Cell cycle</keyword>
<keyword id="KW-0132">Cell division</keyword>
<keyword id="KW-0133">Cell shape</keyword>
<keyword id="KW-0961">Cell wall biogenesis/degradation</keyword>
<keyword id="KW-0963">Cytoplasm</keyword>
<keyword id="KW-0436">Ligase</keyword>
<keyword id="KW-0460">Magnesium</keyword>
<keyword id="KW-0547">Nucleotide-binding</keyword>
<keyword id="KW-0573">Peptidoglycan synthesis</keyword>
<keyword id="KW-1185">Reference proteome</keyword>
<dbReference type="EC" id="6.3.2.13" evidence="1"/>
<dbReference type="EMBL" id="CT971583">
    <property type="protein sequence ID" value="CAK23020.1"/>
    <property type="molecule type" value="Genomic_DNA"/>
</dbReference>
<dbReference type="SMR" id="A5GJA5"/>
<dbReference type="STRING" id="32051.SynWH7803_0594"/>
<dbReference type="KEGG" id="syx:SynWH7803_0594"/>
<dbReference type="eggNOG" id="COG0769">
    <property type="taxonomic scope" value="Bacteria"/>
</dbReference>
<dbReference type="HOGENOM" id="CLU_022291_4_1_3"/>
<dbReference type="OrthoDB" id="9800958at2"/>
<dbReference type="UniPathway" id="UPA00219"/>
<dbReference type="Proteomes" id="UP000001566">
    <property type="component" value="Chromosome"/>
</dbReference>
<dbReference type="GO" id="GO:0005737">
    <property type="term" value="C:cytoplasm"/>
    <property type="evidence" value="ECO:0007669"/>
    <property type="project" value="UniProtKB-SubCell"/>
</dbReference>
<dbReference type="GO" id="GO:0005524">
    <property type="term" value="F:ATP binding"/>
    <property type="evidence" value="ECO:0007669"/>
    <property type="project" value="UniProtKB-UniRule"/>
</dbReference>
<dbReference type="GO" id="GO:0000287">
    <property type="term" value="F:magnesium ion binding"/>
    <property type="evidence" value="ECO:0007669"/>
    <property type="project" value="UniProtKB-UniRule"/>
</dbReference>
<dbReference type="GO" id="GO:0008765">
    <property type="term" value="F:UDP-N-acetylmuramoylalanyl-D-glutamate-2,6-diaminopimelate ligase activity"/>
    <property type="evidence" value="ECO:0007669"/>
    <property type="project" value="UniProtKB-UniRule"/>
</dbReference>
<dbReference type="GO" id="GO:0051301">
    <property type="term" value="P:cell division"/>
    <property type="evidence" value="ECO:0007669"/>
    <property type="project" value="UniProtKB-KW"/>
</dbReference>
<dbReference type="GO" id="GO:0071555">
    <property type="term" value="P:cell wall organization"/>
    <property type="evidence" value="ECO:0007669"/>
    <property type="project" value="UniProtKB-KW"/>
</dbReference>
<dbReference type="GO" id="GO:0009252">
    <property type="term" value="P:peptidoglycan biosynthetic process"/>
    <property type="evidence" value="ECO:0007669"/>
    <property type="project" value="UniProtKB-UniRule"/>
</dbReference>
<dbReference type="GO" id="GO:0008360">
    <property type="term" value="P:regulation of cell shape"/>
    <property type="evidence" value="ECO:0007669"/>
    <property type="project" value="UniProtKB-KW"/>
</dbReference>
<dbReference type="FunFam" id="3.90.190.20:FF:000006">
    <property type="entry name" value="UDP-N-acetylmuramoyl-L-alanyl-D-glutamate--2,6-diaminopimelate ligase"/>
    <property type="match status" value="1"/>
</dbReference>
<dbReference type="Gene3D" id="3.90.190.20">
    <property type="entry name" value="Mur ligase, C-terminal domain"/>
    <property type="match status" value="1"/>
</dbReference>
<dbReference type="Gene3D" id="3.40.1190.10">
    <property type="entry name" value="Mur-like, catalytic domain"/>
    <property type="match status" value="1"/>
</dbReference>
<dbReference type="Gene3D" id="3.40.1390.10">
    <property type="entry name" value="MurE/MurF, N-terminal domain"/>
    <property type="match status" value="1"/>
</dbReference>
<dbReference type="HAMAP" id="MF_00208">
    <property type="entry name" value="MurE"/>
    <property type="match status" value="1"/>
</dbReference>
<dbReference type="InterPro" id="IPR036565">
    <property type="entry name" value="Mur-like_cat_sf"/>
</dbReference>
<dbReference type="InterPro" id="IPR004101">
    <property type="entry name" value="Mur_ligase_C"/>
</dbReference>
<dbReference type="InterPro" id="IPR036615">
    <property type="entry name" value="Mur_ligase_C_dom_sf"/>
</dbReference>
<dbReference type="InterPro" id="IPR013221">
    <property type="entry name" value="Mur_ligase_cen"/>
</dbReference>
<dbReference type="InterPro" id="IPR000713">
    <property type="entry name" value="Mur_ligase_N"/>
</dbReference>
<dbReference type="InterPro" id="IPR035911">
    <property type="entry name" value="MurE/MurF_N"/>
</dbReference>
<dbReference type="InterPro" id="IPR005761">
    <property type="entry name" value="UDP-N-AcMur-Glu-dNH2Pim_ligase"/>
</dbReference>
<dbReference type="NCBIfam" id="TIGR01085">
    <property type="entry name" value="murE"/>
    <property type="match status" value="1"/>
</dbReference>
<dbReference type="NCBIfam" id="NF001124">
    <property type="entry name" value="PRK00139.1-2"/>
    <property type="match status" value="1"/>
</dbReference>
<dbReference type="NCBIfam" id="NF001126">
    <property type="entry name" value="PRK00139.1-4"/>
    <property type="match status" value="1"/>
</dbReference>
<dbReference type="PANTHER" id="PTHR23135">
    <property type="entry name" value="MUR LIGASE FAMILY MEMBER"/>
    <property type="match status" value="1"/>
</dbReference>
<dbReference type="PANTHER" id="PTHR23135:SF4">
    <property type="entry name" value="UDP-N-ACETYLMURAMOYL-L-ALANYL-D-GLUTAMATE--2,6-DIAMINOPIMELATE LIGASE MURE HOMOLOG, CHLOROPLASTIC"/>
    <property type="match status" value="1"/>
</dbReference>
<dbReference type="Pfam" id="PF01225">
    <property type="entry name" value="Mur_ligase"/>
    <property type="match status" value="1"/>
</dbReference>
<dbReference type="Pfam" id="PF02875">
    <property type="entry name" value="Mur_ligase_C"/>
    <property type="match status" value="1"/>
</dbReference>
<dbReference type="Pfam" id="PF08245">
    <property type="entry name" value="Mur_ligase_M"/>
    <property type="match status" value="1"/>
</dbReference>
<dbReference type="SUPFAM" id="SSF53623">
    <property type="entry name" value="MurD-like peptide ligases, catalytic domain"/>
    <property type="match status" value="1"/>
</dbReference>
<dbReference type="SUPFAM" id="SSF53244">
    <property type="entry name" value="MurD-like peptide ligases, peptide-binding domain"/>
    <property type="match status" value="1"/>
</dbReference>
<dbReference type="SUPFAM" id="SSF63418">
    <property type="entry name" value="MurE/MurF N-terminal domain"/>
    <property type="match status" value="1"/>
</dbReference>
<sequence length="499" mass="52928">MTQTLHALLKAVGLPVPAGVANATVTALTCDSRCVGQGSLFIGLPGERVDGGSFWPAALASGAAAVLIGEQAAAAHPPAPGDSVLVVPDPVAFWAGELASAFWQRPSMRMELIGVTGTNGKTTTTHLIEHLSQACGRPAALFGTLVNRWPGHSLTATHTTAAADRLQAQLAEALEGGTQVAAMEVSSHALDQQRVAGCRFSGAVFTNLTQDHLDYHPSMEAYFEAKALLFASPYLVGEGPRAVVNVDDPWGRQLADRLGERAWRCSLAHEADLTMADLRMTSNGVDGALRTPLGEGRFHSPLVGRFNLMNVLQAVGALLQQGLPLPLLLNALPSFRGVPGRMERIVLTGSAAEDHPAVLVDYAHTPDGLRNALEACRPFVRGQLICVFGCGGDRDRGKRPQMAAIAAALADQVVVTSDNPRTEDPGQILDDVVAGLPADAERQVEVDRAKAIALAIAQARCGDLVLIAGKGHEDYQILGTEKVHFDDREQAEQALRHWR</sequence>
<comment type="function">
    <text evidence="1">Catalyzes the addition of meso-diaminopimelic acid to the nucleotide precursor UDP-N-acetylmuramoyl-L-alanyl-D-glutamate (UMAG) in the biosynthesis of bacterial cell-wall peptidoglycan.</text>
</comment>
<comment type="catalytic activity">
    <reaction evidence="1">
        <text>UDP-N-acetyl-alpha-D-muramoyl-L-alanyl-D-glutamate + meso-2,6-diaminopimelate + ATP = UDP-N-acetyl-alpha-D-muramoyl-L-alanyl-gamma-D-glutamyl-meso-2,6-diaminopimelate + ADP + phosphate + H(+)</text>
        <dbReference type="Rhea" id="RHEA:23676"/>
        <dbReference type="ChEBI" id="CHEBI:15378"/>
        <dbReference type="ChEBI" id="CHEBI:30616"/>
        <dbReference type="ChEBI" id="CHEBI:43474"/>
        <dbReference type="ChEBI" id="CHEBI:57791"/>
        <dbReference type="ChEBI" id="CHEBI:83900"/>
        <dbReference type="ChEBI" id="CHEBI:83905"/>
        <dbReference type="ChEBI" id="CHEBI:456216"/>
        <dbReference type="EC" id="6.3.2.13"/>
    </reaction>
</comment>
<comment type="cofactor">
    <cofactor evidence="1">
        <name>Mg(2+)</name>
        <dbReference type="ChEBI" id="CHEBI:18420"/>
    </cofactor>
</comment>
<comment type="pathway">
    <text evidence="1">Cell wall biogenesis; peptidoglycan biosynthesis.</text>
</comment>
<comment type="subcellular location">
    <subcellularLocation>
        <location evidence="1">Cytoplasm</location>
    </subcellularLocation>
</comment>
<comment type="PTM">
    <text evidence="1">Carboxylation is probably crucial for Mg(2+) binding and, consequently, for the gamma-phosphate positioning of ATP.</text>
</comment>
<comment type="similarity">
    <text evidence="1">Belongs to the MurCDEF family. MurE subfamily.</text>
</comment>
<feature type="chain" id="PRO_1000012399" description="UDP-N-acetylmuramoyl-L-alanyl-D-glutamate--2,6-diaminopimelate ligase">
    <location>
        <begin position="1"/>
        <end position="499"/>
    </location>
</feature>
<feature type="short sequence motif" description="Meso-diaminopimelate recognition motif">
    <location>
        <begin position="418"/>
        <end position="421"/>
    </location>
</feature>
<feature type="binding site" evidence="1">
    <location>
        <position position="32"/>
    </location>
    <ligand>
        <name>UDP-N-acetyl-alpha-D-muramoyl-L-alanyl-D-glutamate</name>
        <dbReference type="ChEBI" id="CHEBI:83900"/>
    </ligand>
</feature>
<feature type="binding site" evidence="1">
    <location>
        <begin position="117"/>
        <end position="123"/>
    </location>
    <ligand>
        <name>ATP</name>
        <dbReference type="ChEBI" id="CHEBI:30616"/>
    </ligand>
</feature>
<feature type="binding site" evidence="1">
    <location>
        <begin position="159"/>
        <end position="160"/>
    </location>
    <ligand>
        <name>UDP-N-acetyl-alpha-D-muramoyl-L-alanyl-D-glutamate</name>
        <dbReference type="ChEBI" id="CHEBI:83900"/>
    </ligand>
</feature>
<feature type="binding site" evidence="1">
    <location>
        <position position="186"/>
    </location>
    <ligand>
        <name>UDP-N-acetyl-alpha-D-muramoyl-L-alanyl-D-glutamate</name>
        <dbReference type="ChEBI" id="CHEBI:83900"/>
    </ligand>
</feature>
<feature type="binding site" evidence="1">
    <location>
        <position position="192"/>
    </location>
    <ligand>
        <name>UDP-N-acetyl-alpha-D-muramoyl-L-alanyl-D-glutamate</name>
        <dbReference type="ChEBI" id="CHEBI:83900"/>
    </ligand>
</feature>
<feature type="binding site" evidence="1">
    <location>
        <position position="194"/>
    </location>
    <ligand>
        <name>UDP-N-acetyl-alpha-D-muramoyl-L-alanyl-D-glutamate</name>
        <dbReference type="ChEBI" id="CHEBI:83900"/>
    </ligand>
</feature>
<feature type="binding site" evidence="1">
    <location>
        <position position="394"/>
    </location>
    <ligand>
        <name>meso-2,6-diaminopimelate</name>
        <dbReference type="ChEBI" id="CHEBI:57791"/>
    </ligand>
</feature>
<feature type="binding site" evidence="1">
    <location>
        <begin position="418"/>
        <end position="421"/>
    </location>
    <ligand>
        <name>meso-2,6-diaminopimelate</name>
        <dbReference type="ChEBI" id="CHEBI:57791"/>
    </ligand>
</feature>
<feature type="binding site" evidence="1">
    <location>
        <position position="469"/>
    </location>
    <ligand>
        <name>meso-2,6-diaminopimelate</name>
        <dbReference type="ChEBI" id="CHEBI:57791"/>
    </ligand>
</feature>
<feature type="binding site" evidence="1">
    <location>
        <position position="473"/>
    </location>
    <ligand>
        <name>meso-2,6-diaminopimelate</name>
        <dbReference type="ChEBI" id="CHEBI:57791"/>
    </ligand>
</feature>
<feature type="modified residue" description="N6-carboxylysine" evidence="1">
    <location>
        <position position="226"/>
    </location>
</feature>
<name>MURE_SYNPW</name>
<reference key="1">
    <citation type="submission" date="2006-05" db="EMBL/GenBank/DDBJ databases">
        <authorList>
            <consortium name="Genoscope"/>
        </authorList>
    </citation>
    <scope>NUCLEOTIDE SEQUENCE [LARGE SCALE GENOMIC DNA]</scope>
    <source>
        <strain>WH7803</strain>
    </source>
</reference>
<proteinExistence type="inferred from homology"/>
<gene>
    <name evidence="1" type="primary">murE</name>
    <name type="ordered locus">SynWH7803_0594</name>
</gene>
<protein>
    <recommendedName>
        <fullName evidence="1">UDP-N-acetylmuramoyl-L-alanyl-D-glutamate--2,6-diaminopimelate ligase</fullName>
        <ecNumber evidence="1">6.3.2.13</ecNumber>
    </recommendedName>
    <alternativeName>
        <fullName evidence="1">Meso-A2pm-adding enzyme</fullName>
    </alternativeName>
    <alternativeName>
        <fullName evidence="1">Meso-diaminopimelate-adding enzyme</fullName>
    </alternativeName>
    <alternativeName>
        <fullName evidence="1">UDP-MurNAc-L-Ala-D-Glu:meso-diaminopimelate ligase</fullName>
    </alternativeName>
    <alternativeName>
        <fullName evidence="1">UDP-MurNAc-tripeptide synthetase</fullName>
    </alternativeName>
    <alternativeName>
        <fullName evidence="1">UDP-N-acetylmuramyl-tripeptide synthetase</fullName>
    </alternativeName>
</protein>
<accession>A5GJA5</accession>
<organism>
    <name type="scientific">Synechococcus sp. (strain WH7803)</name>
    <dbReference type="NCBI Taxonomy" id="32051"/>
    <lineage>
        <taxon>Bacteria</taxon>
        <taxon>Bacillati</taxon>
        <taxon>Cyanobacteriota</taxon>
        <taxon>Cyanophyceae</taxon>
        <taxon>Synechococcales</taxon>
        <taxon>Synechococcaceae</taxon>
        <taxon>Synechococcus</taxon>
    </lineage>
</organism>